<keyword id="KW-0328">Glycosyltransferase</keyword>
<keyword id="KW-0441">Lipid A biosynthesis</keyword>
<keyword id="KW-0444">Lipid biosynthesis</keyword>
<keyword id="KW-0443">Lipid metabolism</keyword>
<keyword id="KW-1185">Reference proteome</keyword>
<keyword id="KW-0808">Transferase</keyword>
<name>LPXB_CHRVO</name>
<comment type="function">
    <text evidence="1">Condensation of UDP-2,3-diacylglucosamine and 2,3-diacylglucosamine-1-phosphate to form lipid A disaccharide, a precursor of lipid A, a phosphorylated glycolipid that anchors the lipopolysaccharide to the outer membrane of the cell.</text>
</comment>
<comment type="catalytic activity">
    <reaction evidence="1">
        <text>a lipid X + a UDP-2-N,3-O-bis[(3R)-3-hydroxyacyl]-alpha-D-glucosamine = a lipid A disaccharide + UDP + H(+)</text>
        <dbReference type="Rhea" id="RHEA:67828"/>
        <dbReference type="ChEBI" id="CHEBI:15378"/>
        <dbReference type="ChEBI" id="CHEBI:58223"/>
        <dbReference type="ChEBI" id="CHEBI:137748"/>
        <dbReference type="ChEBI" id="CHEBI:176338"/>
        <dbReference type="ChEBI" id="CHEBI:176343"/>
        <dbReference type="EC" id="2.4.1.182"/>
    </reaction>
</comment>
<comment type="pathway">
    <text evidence="1">Bacterial outer membrane biogenesis; LPS lipid A biosynthesis.</text>
</comment>
<comment type="similarity">
    <text evidence="1">Belongs to the LpxB family.</text>
</comment>
<gene>
    <name evidence="1" type="primary">lpxB</name>
    <name type="ordered locus">CV_2209</name>
</gene>
<proteinExistence type="inferred from homology"/>
<evidence type="ECO:0000255" key="1">
    <source>
        <dbReference type="HAMAP-Rule" id="MF_00392"/>
    </source>
</evidence>
<feature type="chain" id="PRO_0000190162" description="Lipid-A-disaccharide synthase">
    <location>
        <begin position="1"/>
        <end position="386"/>
    </location>
</feature>
<dbReference type="EC" id="2.4.1.182" evidence="1"/>
<dbReference type="EMBL" id="AE016825">
    <property type="protein sequence ID" value="AAQ59882.1"/>
    <property type="molecule type" value="Genomic_DNA"/>
</dbReference>
<dbReference type="SMR" id="Q7NVY1"/>
<dbReference type="STRING" id="243365.CV_2209"/>
<dbReference type="CAZy" id="GT19">
    <property type="family name" value="Glycosyltransferase Family 19"/>
</dbReference>
<dbReference type="KEGG" id="cvi:CV_2209"/>
<dbReference type="eggNOG" id="COG0763">
    <property type="taxonomic scope" value="Bacteria"/>
</dbReference>
<dbReference type="HOGENOM" id="CLU_036577_3_0_4"/>
<dbReference type="UniPathway" id="UPA00973"/>
<dbReference type="Proteomes" id="UP000001424">
    <property type="component" value="Chromosome"/>
</dbReference>
<dbReference type="GO" id="GO:0016020">
    <property type="term" value="C:membrane"/>
    <property type="evidence" value="ECO:0007669"/>
    <property type="project" value="GOC"/>
</dbReference>
<dbReference type="GO" id="GO:0008915">
    <property type="term" value="F:lipid-A-disaccharide synthase activity"/>
    <property type="evidence" value="ECO:0007669"/>
    <property type="project" value="UniProtKB-UniRule"/>
</dbReference>
<dbReference type="GO" id="GO:0005543">
    <property type="term" value="F:phospholipid binding"/>
    <property type="evidence" value="ECO:0007669"/>
    <property type="project" value="TreeGrafter"/>
</dbReference>
<dbReference type="GO" id="GO:0009245">
    <property type="term" value="P:lipid A biosynthetic process"/>
    <property type="evidence" value="ECO:0007669"/>
    <property type="project" value="UniProtKB-UniRule"/>
</dbReference>
<dbReference type="HAMAP" id="MF_00392">
    <property type="entry name" value="LpxB"/>
    <property type="match status" value="1"/>
</dbReference>
<dbReference type="InterPro" id="IPR003835">
    <property type="entry name" value="Glyco_trans_19"/>
</dbReference>
<dbReference type="NCBIfam" id="TIGR00215">
    <property type="entry name" value="lpxB"/>
    <property type="match status" value="1"/>
</dbReference>
<dbReference type="PANTHER" id="PTHR30372">
    <property type="entry name" value="LIPID-A-DISACCHARIDE SYNTHASE"/>
    <property type="match status" value="1"/>
</dbReference>
<dbReference type="PANTHER" id="PTHR30372:SF4">
    <property type="entry name" value="LIPID-A-DISACCHARIDE SYNTHASE, MITOCHONDRIAL-RELATED"/>
    <property type="match status" value="1"/>
</dbReference>
<dbReference type="Pfam" id="PF02684">
    <property type="entry name" value="LpxB"/>
    <property type="match status" value="1"/>
</dbReference>
<dbReference type="SUPFAM" id="SSF53756">
    <property type="entry name" value="UDP-Glycosyltransferase/glycogen phosphorylase"/>
    <property type="match status" value="1"/>
</dbReference>
<reference key="1">
    <citation type="journal article" date="2003" name="Proc. Natl. Acad. Sci. U.S.A.">
        <title>The complete genome sequence of Chromobacterium violaceum reveals remarkable and exploitable bacterial adaptability.</title>
        <authorList>
            <person name="Vasconcelos A.T.R."/>
            <person name="de Almeida D.F."/>
            <person name="Hungria M."/>
            <person name="Guimaraes C.T."/>
            <person name="Antonio R.V."/>
            <person name="Almeida F.C."/>
            <person name="de Almeida L.G.P."/>
            <person name="de Almeida R."/>
            <person name="Alves-Gomes J.A."/>
            <person name="Andrade E.M."/>
            <person name="Araripe J."/>
            <person name="de Araujo M.F.F."/>
            <person name="Astolfi-Filho S."/>
            <person name="Azevedo V."/>
            <person name="Baptista A.J."/>
            <person name="Bataus L.A.M."/>
            <person name="Batista J.S."/>
            <person name="Belo A."/>
            <person name="van den Berg C."/>
            <person name="Bogo M."/>
            <person name="Bonatto S."/>
            <person name="Bordignon J."/>
            <person name="Brigido M.M."/>
            <person name="Brito C.A."/>
            <person name="Brocchi M."/>
            <person name="Burity H.A."/>
            <person name="Camargo A.A."/>
            <person name="Cardoso D.D.P."/>
            <person name="Carneiro N.P."/>
            <person name="Carraro D.M."/>
            <person name="Carvalho C.M.B."/>
            <person name="Cascardo J.C.M."/>
            <person name="Cavada B.S."/>
            <person name="Chueire L.M.O."/>
            <person name="Creczynski-Pasa T.B."/>
            <person name="Cunha-Junior N.C."/>
            <person name="Fagundes N."/>
            <person name="Falcao C.L."/>
            <person name="Fantinatti F."/>
            <person name="Farias I.P."/>
            <person name="Felipe M.S.S."/>
            <person name="Ferrari L.P."/>
            <person name="Ferro J.A."/>
            <person name="Ferro M.I.T."/>
            <person name="Franco G.R."/>
            <person name="Freitas N.S.A."/>
            <person name="Furlan L.R."/>
            <person name="Gazzinelli R.T."/>
            <person name="Gomes E.A."/>
            <person name="Goncalves P.R."/>
            <person name="Grangeiro T.B."/>
            <person name="Grattapaglia D."/>
            <person name="Grisard E.C."/>
            <person name="Hanna E.S."/>
            <person name="Jardim S.N."/>
            <person name="Laurino J."/>
            <person name="Leoi L.C.T."/>
            <person name="Lima L.F.A."/>
            <person name="Loureiro M.F."/>
            <person name="Lyra M.C.C.P."/>
            <person name="Madeira H.M.F."/>
            <person name="Manfio G.P."/>
            <person name="Maranhao A.Q."/>
            <person name="Martins W.S."/>
            <person name="di Mauro S.M.Z."/>
            <person name="de Medeiros S.R.B."/>
            <person name="Meissner R.V."/>
            <person name="Moreira M.A.M."/>
            <person name="Nascimento F.F."/>
            <person name="Nicolas M.F."/>
            <person name="Oliveira J.G."/>
            <person name="Oliveira S.C."/>
            <person name="Paixao R.F.C."/>
            <person name="Parente J.A."/>
            <person name="Pedrosa F.O."/>
            <person name="Pena S.D.J."/>
            <person name="Pereira J.O."/>
            <person name="Pereira M."/>
            <person name="Pinto L.S.R.C."/>
            <person name="Pinto L.S."/>
            <person name="Porto J.I.R."/>
            <person name="Potrich D.P."/>
            <person name="Ramalho-Neto C.E."/>
            <person name="Reis A.M.M."/>
            <person name="Rigo L.U."/>
            <person name="Rondinelli E."/>
            <person name="Santos E.B.P."/>
            <person name="Santos F.R."/>
            <person name="Schneider M.P.C."/>
            <person name="Seuanez H.N."/>
            <person name="Silva A.M.R."/>
            <person name="da Silva A.L.C."/>
            <person name="Silva D.W."/>
            <person name="Silva R."/>
            <person name="Simoes I.C."/>
            <person name="Simon D."/>
            <person name="Soares C.M.A."/>
            <person name="Soares R.B.A."/>
            <person name="Souza E.M."/>
            <person name="Souza K.R.L."/>
            <person name="Souza R.C."/>
            <person name="Steffens M.B.R."/>
            <person name="Steindel M."/>
            <person name="Teixeira S.R."/>
            <person name="Urmenyi T."/>
            <person name="Vettore A."/>
            <person name="Wassem R."/>
            <person name="Zaha A."/>
            <person name="Simpson A.J.G."/>
        </authorList>
    </citation>
    <scope>NUCLEOTIDE SEQUENCE [LARGE SCALE GENOMIC DNA]</scope>
    <source>
        <strain>ATCC 12472 / DSM 30191 / JCM 1249 / CCUG 213 / NBRC 12614 / NCIMB 9131 / NCTC 9757 / MK</strain>
    </source>
</reference>
<accession>Q7NVY1</accession>
<sequence>MFKRKGALKVAMVAGEASGDLLAAHLMDALRAHRSDIEFAGIGGPRMEARGFHSMVPQEKLAVRGYSEVLKSLPELLKIRRRLREQLLEERPDVFIGVDAPDFNLGLEAGLKKGGIPTVHYVSPSVWAWRPERVQKIGRAVNHVLCLFPMEPPLYRQAGVPVTYVGHPLASEIPLEPDREAMRDQLGLPQGVPVFTLMPGSRQSELEYMVPIYLDTARLLLRQYPEAQFLVPLATRATMDQFEQMLYRFKARDLPIRKLFGHAQMAMIASDVVLVTSGTATLEVALTKRPMVISYKLSALTYRLVKRKIKLPYVGLPNILCGRFVVPELLQKQATPQKLAEEMQRLYTDSAARADMEKAFTELHLALKQDTATRAARAVLEVARCH</sequence>
<organism>
    <name type="scientific">Chromobacterium violaceum (strain ATCC 12472 / DSM 30191 / JCM 1249 / CCUG 213 / NBRC 12614 / NCIMB 9131 / NCTC 9757 / MK)</name>
    <dbReference type="NCBI Taxonomy" id="243365"/>
    <lineage>
        <taxon>Bacteria</taxon>
        <taxon>Pseudomonadati</taxon>
        <taxon>Pseudomonadota</taxon>
        <taxon>Betaproteobacteria</taxon>
        <taxon>Neisseriales</taxon>
        <taxon>Chromobacteriaceae</taxon>
        <taxon>Chromobacterium</taxon>
    </lineage>
</organism>
<protein>
    <recommendedName>
        <fullName evidence="1">Lipid-A-disaccharide synthase</fullName>
        <ecNumber evidence="1">2.4.1.182</ecNumber>
    </recommendedName>
</protein>